<evidence type="ECO:0000255" key="1">
    <source>
        <dbReference type="HAMAP-Rule" id="MF_00405"/>
    </source>
</evidence>
<name>FABA_CROS8</name>
<keyword id="KW-0963">Cytoplasm</keyword>
<keyword id="KW-0275">Fatty acid biosynthesis</keyword>
<keyword id="KW-0276">Fatty acid metabolism</keyword>
<keyword id="KW-0413">Isomerase</keyword>
<keyword id="KW-0444">Lipid biosynthesis</keyword>
<keyword id="KW-0443">Lipid metabolism</keyword>
<keyword id="KW-0456">Lyase</keyword>
<keyword id="KW-1185">Reference proteome</keyword>
<gene>
    <name evidence="1" type="primary">fabA</name>
    <name type="ordered locus">ESA_02394</name>
</gene>
<proteinExistence type="inferred from homology"/>
<reference key="1">
    <citation type="journal article" date="2010" name="PLoS ONE">
        <title>Genome sequence of Cronobacter sakazakii BAA-894 and comparative genomic hybridization analysis with other Cronobacter species.</title>
        <authorList>
            <person name="Kucerova E."/>
            <person name="Clifton S.W."/>
            <person name="Xia X.Q."/>
            <person name="Long F."/>
            <person name="Porwollik S."/>
            <person name="Fulton L."/>
            <person name="Fronick C."/>
            <person name="Minx P."/>
            <person name="Kyung K."/>
            <person name="Warren W."/>
            <person name="Fulton R."/>
            <person name="Feng D."/>
            <person name="Wollam A."/>
            <person name="Shah N."/>
            <person name="Bhonagiri V."/>
            <person name="Nash W.E."/>
            <person name="Hallsworth-Pepin K."/>
            <person name="Wilson R.K."/>
            <person name="McClelland M."/>
            <person name="Forsythe S.J."/>
        </authorList>
    </citation>
    <scope>NUCLEOTIDE SEQUENCE [LARGE SCALE GENOMIC DNA]</scope>
    <source>
        <strain>ATCC BAA-894</strain>
    </source>
</reference>
<sequence length="172" mass="18932">MVDKRESYTKEDLLASGRGELFGANGPQLPAPNMLMMDRVVKMTETGGNFDKGYVEAELDINPDMWFFGCHFIGDPVMPGCLGLDAMWQLVGFYLGWLGGEGKGRALGVGEVKFTGQVLPSAKKVTYRIHFKRVVNRRLVMGIADGEVLVDGKQIYTATDLKVGLFQDTSAF</sequence>
<accession>A7MEX0</accession>
<protein>
    <recommendedName>
        <fullName evidence="1">3-hydroxydecanoyl-[acyl-carrier-protein] dehydratase</fullName>
        <ecNumber evidence="1">4.2.1.59</ecNumber>
    </recommendedName>
    <alternativeName>
        <fullName evidence="1">3-hydroxyacyl-[acyl-carrier-protein] dehydratase FabA</fullName>
    </alternativeName>
    <alternativeName>
        <fullName evidence="1">Beta-hydroxydecanoyl thioester dehydrase</fullName>
    </alternativeName>
    <alternativeName>
        <fullName evidence="1">Trans-2-decenoyl-[acyl-carrier-protein] isomerase</fullName>
        <ecNumber evidence="1">5.3.3.14</ecNumber>
    </alternativeName>
</protein>
<comment type="function">
    <text evidence="1">Necessary for the introduction of cis unsaturation into fatty acids. Catalyzes the dehydration of (3R)-3-hydroxydecanoyl-ACP to E-(2)-decenoyl-ACP and then its isomerization to Z-(3)-decenoyl-ACP. Can catalyze the dehydratase reaction for beta-hydroxyacyl-ACPs with saturated chain lengths up to 16:0, being most active on intermediate chain length.</text>
</comment>
<comment type="catalytic activity">
    <reaction evidence="1">
        <text>a (3R)-hydroxyacyl-[ACP] = a (2E)-enoyl-[ACP] + H2O</text>
        <dbReference type="Rhea" id="RHEA:13097"/>
        <dbReference type="Rhea" id="RHEA-COMP:9925"/>
        <dbReference type="Rhea" id="RHEA-COMP:9945"/>
        <dbReference type="ChEBI" id="CHEBI:15377"/>
        <dbReference type="ChEBI" id="CHEBI:78784"/>
        <dbReference type="ChEBI" id="CHEBI:78827"/>
        <dbReference type="EC" id="4.2.1.59"/>
    </reaction>
</comment>
<comment type="catalytic activity">
    <reaction evidence="1">
        <text>(3R)-hydroxydecanoyl-[ACP] = (2E)-decenoyl-[ACP] + H2O</text>
        <dbReference type="Rhea" id="RHEA:41860"/>
        <dbReference type="Rhea" id="RHEA-COMP:9638"/>
        <dbReference type="Rhea" id="RHEA-COMP:9639"/>
        <dbReference type="ChEBI" id="CHEBI:15377"/>
        <dbReference type="ChEBI" id="CHEBI:78466"/>
        <dbReference type="ChEBI" id="CHEBI:78467"/>
    </reaction>
</comment>
<comment type="catalytic activity">
    <reaction evidence="1">
        <text>(2E)-decenoyl-[ACP] = (3Z)-decenoyl-[ACP]</text>
        <dbReference type="Rhea" id="RHEA:23568"/>
        <dbReference type="Rhea" id="RHEA-COMP:9639"/>
        <dbReference type="Rhea" id="RHEA-COMP:9927"/>
        <dbReference type="ChEBI" id="CHEBI:78467"/>
        <dbReference type="ChEBI" id="CHEBI:78798"/>
        <dbReference type="EC" id="5.3.3.14"/>
    </reaction>
</comment>
<comment type="pathway">
    <text evidence="1">Lipid metabolism; fatty acid biosynthesis.</text>
</comment>
<comment type="subunit">
    <text evidence="1">Homodimer.</text>
</comment>
<comment type="subcellular location">
    <subcellularLocation>
        <location evidence="1">Cytoplasm</location>
    </subcellularLocation>
</comment>
<comment type="similarity">
    <text evidence="1">Belongs to the thioester dehydratase family. FabA subfamily.</text>
</comment>
<feature type="chain" id="PRO_1000049824" description="3-hydroxydecanoyl-[acyl-carrier-protein] dehydratase">
    <location>
        <begin position="1"/>
        <end position="172"/>
    </location>
</feature>
<feature type="active site" evidence="1">
    <location>
        <position position="71"/>
    </location>
</feature>
<dbReference type="EC" id="4.2.1.59" evidence="1"/>
<dbReference type="EC" id="5.3.3.14" evidence="1"/>
<dbReference type="EMBL" id="CP000783">
    <property type="protein sequence ID" value="ABU77640.1"/>
    <property type="molecule type" value="Genomic_DNA"/>
</dbReference>
<dbReference type="RefSeq" id="WP_004385423.1">
    <property type="nucleotide sequence ID" value="NC_009778.1"/>
</dbReference>
<dbReference type="SMR" id="A7MEX0"/>
<dbReference type="GeneID" id="56731164"/>
<dbReference type="KEGG" id="esa:ESA_02394"/>
<dbReference type="HOGENOM" id="CLU_097925_0_0_6"/>
<dbReference type="UniPathway" id="UPA00094"/>
<dbReference type="Proteomes" id="UP000000260">
    <property type="component" value="Chromosome"/>
</dbReference>
<dbReference type="GO" id="GO:0005737">
    <property type="term" value="C:cytoplasm"/>
    <property type="evidence" value="ECO:0007669"/>
    <property type="project" value="UniProtKB-SubCell"/>
</dbReference>
<dbReference type="GO" id="GO:0019171">
    <property type="term" value="F:(3R)-hydroxyacyl-[acyl-carrier-protein] dehydratase activity"/>
    <property type="evidence" value="ECO:0007669"/>
    <property type="project" value="UniProtKB-UniRule"/>
</dbReference>
<dbReference type="GO" id="GO:0034017">
    <property type="term" value="F:trans-2-decenoyl-acyl-carrier-protein isomerase activity"/>
    <property type="evidence" value="ECO:0007669"/>
    <property type="project" value="UniProtKB-UniRule"/>
</dbReference>
<dbReference type="GO" id="GO:0006636">
    <property type="term" value="P:unsaturated fatty acid biosynthetic process"/>
    <property type="evidence" value="ECO:0007669"/>
    <property type="project" value="UniProtKB-UniRule"/>
</dbReference>
<dbReference type="CDD" id="cd01287">
    <property type="entry name" value="FabA"/>
    <property type="match status" value="1"/>
</dbReference>
<dbReference type="FunFam" id="3.10.129.10:FF:000003">
    <property type="entry name" value="3-hydroxydecanoyl-[acyl-carrier-protein] dehydratase"/>
    <property type="match status" value="1"/>
</dbReference>
<dbReference type="Gene3D" id="3.10.129.10">
    <property type="entry name" value="Hotdog Thioesterase"/>
    <property type="match status" value="1"/>
</dbReference>
<dbReference type="HAMAP" id="MF_00405">
    <property type="entry name" value="FabA"/>
    <property type="match status" value="1"/>
</dbReference>
<dbReference type="InterPro" id="IPR010083">
    <property type="entry name" value="FabA"/>
</dbReference>
<dbReference type="InterPro" id="IPR013114">
    <property type="entry name" value="FabA_FabZ"/>
</dbReference>
<dbReference type="InterPro" id="IPR029069">
    <property type="entry name" value="HotDog_dom_sf"/>
</dbReference>
<dbReference type="NCBIfam" id="TIGR01749">
    <property type="entry name" value="fabA"/>
    <property type="match status" value="1"/>
</dbReference>
<dbReference type="NCBIfam" id="NF003509">
    <property type="entry name" value="PRK05174.1"/>
    <property type="match status" value="1"/>
</dbReference>
<dbReference type="PANTHER" id="PTHR30272">
    <property type="entry name" value="3-HYDROXYACYL-[ACYL-CARRIER-PROTEIN] DEHYDRATASE"/>
    <property type="match status" value="1"/>
</dbReference>
<dbReference type="PANTHER" id="PTHR30272:SF8">
    <property type="entry name" value="3-HYDROXYDECANOYL-[ACYL-CARRIER-PROTEIN] DEHYDRATASE"/>
    <property type="match status" value="1"/>
</dbReference>
<dbReference type="Pfam" id="PF07977">
    <property type="entry name" value="FabA"/>
    <property type="match status" value="1"/>
</dbReference>
<dbReference type="SUPFAM" id="SSF54637">
    <property type="entry name" value="Thioesterase/thiol ester dehydrase-isomerase"/>
    <property type="match status" value="1"/>
</dbReference>
<organism>
    <name type="scientific">Cronobacter sakazakii (strain ATCC BAA-894)</name>
    <name type="common">Enterobacter sakazakii</name>
    <dbReference type="NCBI Taxonomy" id="290339"/>
    <lineage>
        <taxon>Bacteria</taxon>
        <taxon>Pseudomonadati</taxon>
        <taxon>Pseudomonadota</taxon>
        <taxon>Gammaproteobacteria</taxon>
        <taxon>Enterobacterales</taxon>
        <taxon>Enterobacteriaceae</taxon>
        <taxon>Cronobacter</taxon>
    </lineage>
</organism>